<evidence type="ECO:0000255" key="1">
    <source>
        <dbReference type="HAMAP-Rule" id="MF_01217"/>
    </source>
</evidence>
<evidence type="ECO:0000255" key="2">
    <source>
        <dbReference type="PROSITE-ProRule" id="PRU00258"/>
    </source>
</evidence>
<comment type="function">
    <text evidence="1">Carrier of the growing fatty acid chain in fatty acid biosynthesis.</text>
</comment>
<comment type="pathway">
    <text evidence="1">Lipid metabolism; fatty acid biosynthesis.</text>
</comment>
<comment type="subcellular location">
    <subcellularLocation>
        <location evidence="1">Cytoplasm</location>
    </subcellularLocation>
</comment>
<comment type="PTM">
    <text evidence="1">4'-phosphopantetheine is transferred from CoA to a specific serine of apo-ACP by AcpS. This modification is essential for activity because fatty acids are bound in thioester linkage to the sulfhydryl of the prosthetic group.</text>
</comment>
<comment type="similarity">
    <text evidence="1">Belongs to the acyl carrier protein (ACP) family.</text>
</comment>
<proteinExistence type="inferred from homology"/>
<organism>
    <name type="scientific">Burkholderia orbicola (strain AU 1054)</name>
    <dbReference type="NCBI Taxonomy" id="331271"/>
    <lineage>
        <taxon>Bacteria</taxon>
        <taxon>Pseudomonadati</taxon>
        <taxon>Pseudomonadota</taxon>
        <taxon>Betaproteobacteria</taxon>
        <taxon>Burkholderiales</taxon>
        <taxon>Burkholderiaceae</taxon>
        <taxon>Burkholderia</taxon>
        <taxon>Burkholderia cepacia complex</taxon>
        <taxon>Burkholderia orbicola</taxon>
    </lineage>
</organism>
<protein>
    <recommendedName>
        <fullName evidence="1">Acyl carrier protein</fullName>
        <shortName evidence="1">ACP</shortName>
    </recommendedName>
</protein>
<keyword id="KW-0963">Cytoplasm</keyword>
<keyword id="KW-0275">Fatty acid biosynthesis</keyword>
<keyword id="KW-0276">Fatty acid metabolism</keyword>
<keyword id="KW-0444">Lipid biosynthesis</keyword>
<keyword id="KW-0443">Lipid metabolism</keyword>
<keyword id="KW-0596">Phosphopantetheine</keyword>
<keyword id="KW-0597">Phosphoprotein</keyword>
<sequence length="79" mass="8712">MDNIEQRVKKIVAEQLGVAEAEIKNEASFVNDLGADSLDTVELVMALEDEFGMEIPDEEAEKITTVQQAIDYARANVKA</sequence>
<reference key="1">
    <citation type="submission" date="2006-05" db="EMBL/GenBank/DDBJ databases">
        <title>Complete sequence of chromosome 1 of Burkholderia cenocepacia AU 1054.</title>
        <authorList>
            <consortium name="US DOE Joint Genome Institute"/>
            <person name="Copeland A."/>
            <person name="Lucas S."/>
            <person name="Lapidus A."/>
            <person name="Barry K."/>
            <person name="Detter J.C."/>
            <person name="Glavina del Rio T."/>
            <person name="Hammon N."/>
            <person name="Israni S."/>
            <person name="Dalin E."/>
            <person name="Tice H."/>
            <person name="Pitluck S."/>
            <person name="Chain P."/>
            <person name="Malfatti S."/>
            <person name="Shin M."/>
            <person name="Vergez L."/>
            <person name="Schmutz J."/>
            <person name="Larimer F."/>
            <person name="Land M."/>
            <person name="Hauser L."/>
            <person name="Kyrpides N."/>
            <person name="Lykidis A."/>
            <person name="LiPuma J.J."/>
            <person name="Konstantinidis K."/>
            <person name="Tiedje J.M."/>
            <person name="Richardson P."/>
        </authorList>
    </citation>
    <scope>NUCLEOTIDE SEQUENCE [LARGE SCALE GENOMIC DNA]</scope>
    <source>
        <strain>AU 1054</strain>
    </source>
</reference>
<accession>Q1BXV1</accession>
<dbReference type="EMBL" id="CP000378">
    <property type="protein sequence ID" value="ABF75554.1"/>
    <property type="molecule type" value="Genomic_DNA"/>
</dbReference>
<dbReference type="SMR" id="Q1BXV1"/>
<dbReference type="HOGENOM" id="CLU_108696_5_1_4"/>
<dbReference type="UniPathway" id="UPA00094"/>
<dbReference type="GO" id="GO:0005829">
    <property type="term" value="C:cytosol"/>
    <property type="evidence" value="ECO:0007669"/>
    <property type="project" value="TreeGrafter"/>
</dbReference>
<dbReference type="GO" id="GO:0016020">
    <property type="term" value="C:membrane"/>
    <property type="evidence" value="ECO:0007669"/>
    <property type="project" value="GOC"/>
</dbReference>
<dbReference type="GO" id="GO:0000035">
    <property type="term" value="F:acyl binding"/>
    <property type="evidence" value="ECO:0007669"/>
    <property type="project" value="TreeGrafter"/>
</dbReference>
<dbReference type="GO" id="GO:0000036">
    <property type="term" value="F:acyl carrier activity"/>
    <property type="evidence" value="ECO:0007669"/>
    <property type="project" value="UniProtKB-UniRule"/>
</dbReference>
<dbReference type="GO" id="GO:0009245">
    <property type="term" value="P:lipid A biosynthetic process"/>
    <property type="evidence" value="ECO:0007669"/>
    <property type="project" value="TreeGrafter"/>
</dbReference>
<dbReference type="FunFam" id="1.10.1200.10:FF:000001">
    <property type="entry name" value="Acyl carrier protein"/>
    <property type="match status" value="1"/>
</dbReference>
<dbReference type="Gene3D" id="1.10.1200.10">
    <property type="entry name" value="ACP-like"/>
    <property type="match status" value="1"/>
</dbReference>
<dbReference type="HAMAP" id="MF_01217">
    <property type="entry name" value="Acyl_carrier"/>
    <property type="match status" value="1"/>
</dbReference>
<dbReference type="InterPro" id="IPR003231">
    <property type="entry name" value="ACP"/>
</dbReference>
<dbReference type="InterPro" id="IPR036736">
    <property type="entry name" value="ACP-like_sf"/>
</dbReference>
<dbReference type="InterPro" id="IPR009081">
    <property type="entry name" value="PP-bd_ACP"/>
</dbReference>
<dbReference type="InterPro" id="IPR006162">
    <property type="entry name" value="Ppantetheine_attach_site"/>
</dbReference>
<dbReference type="NCBIfam" id="TIGR00517">
    <property type="entry name" value="acyl_carrier"/>
    <property type="match status" value="1"/>
</dbReference>
<dbReference type="NCBIfam" id="NF002148">
    <property type="entry name" value="PRK00982.1-2"/>
    <property type="match status" value="1"/>
</dbReference>
<dbReference type="NCBIfam" id="NF002149">
    <property type="entry name" value="PRK00982.1-3"/>
    <property type="match status" value="1"/>
</dbReference>
<dbReference type="NCBIfam" id="NF002150">
    <property type="entry name" value="PRK00982.1-4"/>
    <property type="match status" value="1"/>
</dbReference>
<dbReference type="NCBIfam" id="NF002151">
    <property type="entry name" value="PRK00982.1-5"/>
    <property type="match status" value="1"/>
</dbReference>
<dbReference type="PANTHER" id="PTHR20863">
    <property type="entry name" value="ACYL CARRIER PROTEIN"/>
    <property type="match status" value="1"/>
</dbReference>
<dbReference type="PANTHER" id="PTHR20863:SF76">
    <property type="entry name" value="CARRIER DOMAIN-CONTAINING PROTEIN"/>
    <property type="match status" value="1"/>
</dbReference>
<dbReference type="Pfam" id="PF00550">
    <property type="entry name" value="PP-binding"/>
    <property type="match status" value="1"/>
</dbReference>
<dbReference type="SUPFAM" id="SSF47336">
    <property type="entry name" value="ACP-like"/>
    <property type="match status" value="1"/>
</dbReference>
<dbReference type="PROSITE" id="PS50075">
    <property type="entry name" value="CARRIER"/>
    <property type="match status" value="1"/>
</dbReference>
<dbReference type="PROSITE" id="PS00012">
    <property type="entry name" value="PHOSPHOPANTETHEINE"/>
    <property type="match status" value="1"/>
</dbReference>
<name>ACP_BURO1</name>
<gene>
    <name evidence="1" type="primary">acpP</name>
    <name type="ordered locus">Bcen_0644</name>
</gene>
<feature type="chain" id="PRO_1000066569" description="Acyl carrier protein">
    <location>
        <begin position="1"/>
        <end position="79"/>
    </location>
</feature>
<feature type="domain" description="Carrier" evidence="2">
    <location>
        <begin position="2"/>
        <end position="77"/>
    </location>
</feature>
<feature type="modified residue" description="O-(pantetheine 4'-phosphoryl)serine" evidence="2">
    <location>
        <position position="37"/>
    </location>
</feature>